<accession>Q9C664</accession>
<organism>
    <name type="scientific">Arabidopsis thaliana</name>
    <name type="common">Mouse-ear cress</name>
    <dbReference type="NCBI Taxonomy" id="3702"/>
    <lineage>
        <taxon>Eukaryota</taxon>
        <taxon>Viridiplantae</taxon>
        <taxon>Streptophyta</taxon>
        <taxon>Embryophyta</taxon>
        <taxon>Tracheophyta</taxon>
        <taxon>Spermatophyta</taxon>
        <taxon>Magnoliopsida</taxon>
        <taxon>eudicotyledons</taxon>
        <taxon>Gunneridae</taxon>
        <taxon>Pentapetalae</taxon>
        <taxon>rosids</taxon>
        <taxon>malvids</taxon>
        <taxon>Brassicales</taxon>
        <taxon>Brassicaceae</taxon>
        <taxon>Camelineae</taxon>
        <taxon>Arabidopsis</taxon>
    </lineage>
</organism>
<name>TTM2_ARATH</name>
<protein>
    <recommendedName>
        <fullName evidence="7">Inorganic pyrophosphatase TTM2</fullName>
        <ecNumber evidence="5">3.6.1.1</ecNumber>
    </recommendedName>
    <alternativeName>
        <fullName evidence="6">Triphosphate tunnel metalloenzyme 2</fullName>
        <shortName evidence="6">AtTTM2</shortName>
    </alternativeName>
</protein>
<comment type="function">
    <text evidence="4 5">Exhibits pyrophosphatase activity with stronger affinity for pyrophosphate (PPi), moderate affinity for ATP and ADP, and weak affinity for tripolyphosphate (PPPi) (PubMed:25185123, PubMed:28733390). No activity observed toward uridine substrate (PubMed:28733390). Negative regulator of the salicylic acid (SA)-mediated amplification of defense responses against both virulent and avirulent pathogens, including oomycetes (e.g. H.arabidopsidis) and bacteria (e.g. P.syringae). Represses systemic acquired resistance (SAR) (PubMed:25185123).</text>
</comment>
<comment type="catalytic activity">
    <reaction evidence="5">
        <text>diphosphate + H2O = 2 phosphate + H(+)</text>
        <dbReference type="Rhea" id="RHEA:24576"/>
        <dbReference type="ChEBI" id="CHEBI:15377"/>
        <dbReference type="ChEBI" id="CHEBI:15378"/>
        <dbReference type="ChEBI" id="CHEBI:33019"/>
        <dbReference type="ChEBI" id="CHEBI:43474"/>
        <dbReference type="EC" id="3.6.1.1"/>
    </reaction>
</comment>
<comment type="cofactor">
    <cofactor evidence="5">
        <name>Mg(2+)</name>
        <dbReference type="ChEBI" id="CHEBI:18420"/>
    </cofactor>
</comment>
<comment type="biophysicochemical properties">
    <kinetics>
        <KM evidence="5">17 uM for pyrophosphate</KM>
        <Vmax evidence="5">366.0 nmol/min/ug enzyme with pyrophosphate as substrate</Vmax>
    </kinetics>
    <phDependence>
        <text evidence="5">Optimum pH is 8-9.</text>
    </phDependence>
</comment>
<comment type="subcellular location">
    <subcellularLocation>
        <location evidence="5">Mitochondrion outer membrane</location>
        <topology evidence="1">Single-pass membrane protein</topology>
    </subcellularLocation>
</comment>
<comment type="tissue specificity">
    <text evidence="5">Predominantly expressed in the shoot apices of inflorescences.</text>
</comment>
<comment type="induction">
    <text evidence="4">Repressed by the oomycete pathogen H.arabidopsidis. Negatively regulated by salicylic acid (SA), benzothiadiazole (BTH) and pathogen-associated molecular patterns (PAMP, e.g. flg22).</text>
</comment>
<comment type="disruption phenotype">
    <text evidence="4">Enhanced hypersensitive response, elevated pathogen resistance against both virulent and avirulent pathogens (e.g. isolates Emwa1 and Emco5 of the oomycete pathogen H.arabidopsidis, the bacterial pathogen P.syringae DC3000 (AvrRps4)). Elevated accumulation of salicylic acid (SA) and conjugates (e.g. salicylic acid glucoside (SAG)) upon infection. Stronger systemic acquired resistance (SAR). These increased defense responses are PAD4-, ICS1- and NPR1-dependent.</text>
</comment>
<evidence type="ECO:0000255" key="1"/>
<evidence type="ECO:0000255" key="2">
    <source>
        <dbReference type="PROSITE-ProRule" id="PRU01044"/>
    </source>
</evidence>
<evidence type="ECO:0000256" key="3">
    <source>
        <dbReference type="SAM" id="MobiDB-lite"/>
    </source>
</evidence>
<evidence type="ECO:0000269" key="4">
    <source>
    </source>
</evidence>
<evidence type="ECO:0000269" key="5">
    <source>
    </source>
</evidence>
<evidence type="ECO:0000303" key="6">
    <source>
    </source>
</evidence>
<evidence type="ECO:0000305" key="7"/>
<evidence type="ECO:0000312" key="8">
    <source>
        <dbReference type="Araport" id="AT1G26190"/>
    </source>
</evidence>
<evidence type="ECO:0000312" key="9">
    <source>
        <dbReference type="EMBL" id="AAG50674.1"/>
    </source>
</evidence>
<reference key="1">
    <citation type="journal article" date="2000" name="Nature">
        <title>Sequence and analysis of chromosome 1 of the plant Arabidopsis thaliana.</title>
        <authorList>
            <person name="Theologis A."/>
            <person name="Ecker J.R."/>
            <person name="Palm C.J."/>
            <person name="Federspiel N.A."/>
            <person name="Kaul S."/>
            <person name="White O."/>
            <person name="Alonso J."/>
            <person name="Altafi H."/>
            <person name="Araujo R."/>
            <person name="Bowman C.L."/>
            <person name="Brooks S.Y."/>
            <person name="Buehler E."/>
            <person name="Chan A."/>
            <person name="Chao Q."/>
            <person name="Chen H."/>
            <person name="Cheuk R.F."/>
            <person name="Chin C.W."/>
            <person name="Chung M.K."/>
            <person name="Conn L."/>
            <person name="Conway A.B."/>
            <person name="Conway A.R."/>
            <person name="Creasy T.H."/>
            <person name="Dewar K."/>
            <person name="Dunn P."/>
            <person name="Etgu P."/>
            <person name="Feldblyum T.V."/>
            <person name="Feng J.-D."/>
            <person name="Fong B."/>
            <person name="Fujii C.Y."/>
            <person name="Gill J.E."/>
            <person name="Goldsmith A.D."/>
            <person name="Haas B."/>
            <person name="Hansen N.F."/>
            <person name="Hughes B."/>
            <person name="Huizar L."/>
            <person name="Hunter J.L."/>
            <person name="Jenkins J."/>
            <person name="Johnson-Hopson C."/>
            <person name="Khan S."/>
            <person name="Khaykin E."/>
            <person name="Kim C.J."/>
            <person name="Koo H.L."/>
            <person name="Kremenetskaia I."/>
            <person name="Kurtz D.B."/>
            <person name="Kwan A."/>
            <person name="Lam B."/>
            <person name="Langin-Hooper S."/>
            <person name="Lee A."/>
            <person name="Lee J.M."/>
            <person name="Lenz C.A."/>
            <person name="Li J.H."/>
            <person name="Li Y.-P."/>
            <person name="Lin X."/>
            <person name="Liu S.X."/>
            <person name="Liu Z.A."/>
            <person name="Luros J.S."/>
            <person name="Maiti R."/>
            <person name="Marziali A."/>
            <person name="Militscher J."/>
            <person name="Miranda M."/>
            <person name="Nguyen M."/>
            <person name="Nierman W.C."/>
            <person name="Osborne B.I."/>
            <person name="Pai G."/>
            <person name="Peterson J."/>
            <person name="Pham P.K."/>
            <person name="Rizzo M."/>
            <person name="Rooney T."/>
            <person name="Rowley D."/>
            <person name="Sakano H."/>
            <person name="Salzberg S.L."/>
            <person name="Schwartz J.R."/>
            <person name="Shinn P."/>
            <person name="Southwick A.M."/>
            <person name="Sun H."/>
            <person name="Tallon L.J."/>
            <person name="Tambunga G."/>
            <person name="Toriumi M.J."/>
            <person name="Town C.D."/>
            <person name="Utterback T."/>
            <person name="Van Aken S."/>
            <person name="Vaysberg M."/>
            <person name="Vysotskaia V.S."/>
            <person name="Walker M."/>
            <person name="Wu D."/>
            <person name="Yu G."/>
            <person name="Fraser C.M."/>
            <person name="Venter J.C."/>
            <person name="Davis R.W."/>
        </authorList>
    </citation>
    <scope>NUCLEOTIDE SEQUENCE [LARGE SCALE GENOMIC DNA]</scope>
    <source>
        <strain>cv. Columbia</strain>
    </source>
</reference>
<reference key="2">
    <citation type="journal article" date="2017" name="Plant J.">
        <title>Araport11: a complete reannotation of the Arabidopsis thaliana reference genome.</title>
        <authorList>
            <person name="Cheng C.Y."/>
            <person name="Krishnakumar V."/>
            <person name="Chan A.P."/>
            <person name="Thibaud-Nissen F."/>
            <person name="Schobel S."/>
            <person name="Town C.D."/>
        </authorList>
    </citation>
    <scope>GENOME REANNOTATION</scope>
    <source>
        <strain>cv. Columbia</strain>
    </source>
</reference>
<reference key="3">
    <citation type="journal article" date="2003" name="Science">
        <title>Empirical analysis of transcriptional activity in the Arabidopsis genome.</title>
        <authorList>
            <person name="Yamada K."/>
            <person name="Lim J."/>
            <person name="Dale J.M."/>
            <person name="Chen H."/>
            <person name="Shinn P."/>
            <person name="Palm C.J."/>
            <person name="Southwick A.M."/>
            <person name="Wu H.C."/>
            <person name="Kim C.J."/>
            <person name="Nguyen M."/>
            <person name="Pham P.K."/>
            <person name="Cheuk R.F."/>
            <person name="Karlin-Newmann G."/>
            <person name="Liu S.X."/>
            <person name="Lam B."/>
            <person name="Sakano H."/>
            <person name="Wu T."/>
            <person name="Yu G."/>
            <person name="Miranda M."/>
            <person name="Quach H.L."/>
            <person name="Tripp M."/>
            <person name="Chang C.H."/>
            <person name="Lee J.M."/>
            <person name="Toriumi M.J."/>
            <person name="Chan M.M."/>
            <person name="Tang C.C."/>
            <person name="Onodera C.S."/>
            <person name="Deng J.M."/>
            <person name="Akiyama K."/>
            <person name="Ansari Y."/>
            <person name="Arakawa T."/>
            <person name="Banh J."/>
            <person name="Banno F."/>
            <person name="Bowser L."/>
            <person name="Brooks S.Y."/>
            <person name="Carninci P."/>
            <person name="Chao Q."/>
            <person name="Choy N."/>
            <person name="Enju A."/>
            <person name="Goldsmith A.D."/>
            <person name="Gurjal M."/>
            <person name="Hansen N.F."/>
            <person name="Hayashizaki Y."/>
            <person name="Johnson-Hopson C."/>
            <person name="Hsuan V.W."/>
            <person name="Iida K."/>
            <person name="Karnes M."/>
            <person name="Khan S."/>
            <person name="Koesema E."/>
            <person name="Ishida J."/>
            <person name="Jiang P.X."/>
            <person name="Jones T."/>
            <person name="Kawai J."/>
            <person name="Kamiya A."/>
            <person name="Meyers C."/>
            <person name="Nakajima M."/>
            <person name="Narusaka M."/>
            <person name="Seki M."/>
            <person name="Sakurai T."/>
            <person name="Satou M."/>
            <person name="Tamse R."/>
            <person name="Vaysberg M."/>
            <person name="Wallender E.K."/>
            <person name="Wong C."/>
            <person name="Yamamura Y."/>
            <person name="Yuan S."/>
            <person name="Shinozaki K."/>
            <person name="Davis R.W."/>
            <person name="Theologis A."/>
            <person name="Ecker J.R."/>
        </authorList>
    </citation>
    <scope>NUCLEOTIDE SEQUENCE [LARGE SCALE MRNA]</scope>
    <source>
        <strain>cv. Columbia</strain>
    </source>
</reference>
<reference key="4">
    <citation type="journal article" date="2009" name="Plant Physiol.">
        <title>Large-scale Arabidopsis phosphoproteome profiling reveals novel chloroplast kinase substrates and phosphorylation networks.</title>
        <authorList>
            <person name="Reiland S."/>
            <person name="Messerli G."/>
            <person name="Baerenfaller K."/>
            <person name="Gerrits B."/>
            <person name="Endler A."/>
            <person name="Grossmann J."/>
            <person name="Gruissem W."/>
            <person name="Baginsky S."/>
        </authorList>
    </citation>
    <scope>IDENTIFICATION BY MASS SPECTROMETRY [LARGE SCALE ANALYSIS]</scope>
</reference>
<reference key="5">
    <citation type="journal article" date="2014" name="Plant Physiol.">
        <title>Arabidopsis triphosphate tunnel metalloenzyme2 is a negative regulator of the salicylic acid-mediated feedback amplification loop for defense responses.</title>
        <authorList>
            <person name="Ung H."/>
            <person name="Moeder W."/>
            <person name="Yoshioka K."/>
        </authorList>
    </citation>
    <scope>FUNCTION</scope>
    <scope>DISRUPTION PHENOTYPE</scope>
    <scope>REPRESSION BY HYALOPERONOSPORA ARABIDOPSIDIS; SALICYLIC ACID; BENZOTHIADIAZOLE AND PATHOGEN-ASSOCIATED MOLECULAR PATTERNS</scope>
    <scope>GENE FAMILY</scope>
    <scope>NOMENCLATURE</scope>
    <source>
        <strain>cv. Columbia</strain>
    </source>
</reference>
<reference key="6">
    <citation type="journal article" date="2017" name="Plant Physiol.">
        <title>Triphosphate tunnel metalloenzyme function in senescence highlights a biological diversification of this protein superfamily.</title>
        <authorList>
            <person name="Ung H."/>
            <person name="Karia P."/>
            <person name="Ebine K."/>
            <person name="Ueda T."/>
            <person name="Yoshioka K."/>
            <person name="Moeder W."/>
        </authorList>
    </citation>
    <scope>FUNCTION</scope>
    <scope>SUBCELLULAR LOCATION</scope>
    <scope>BIOPHYSICOCHEMICAL PROPERTIES</scope>
    <scope>COFACTOR</scope>
    <scope>TISSUE SPECIFICITY</scope>
    <scope>CATALYTIC ACTIVITY</scope>
</reference>
<keyword id="KW-0378">Hydrolase</keyword>
<keyword id="KW-0381">Hypersensitive response</keyword>
<keyword id="KW-0472">Membrane</keyword>
<keyword id="KW-0496">Mitochondrion</keyword>
<keyword id="KW-1000">Mitochondrion outer membrane</keyword>
<keyword id="KW-0611">Plant defense</keyword>
<keyword id="KW-1185">Reference proteome</keyword>
<keyword id="KW-0812">Transmembrane</keyword>
<keyword id="KW-1133">Transmembrane helix</keyword>
<proteinExistence type="evidence at protein level"/>
<feature type="chain" id="PRO_0000444984" description="Inorganic pyrophosphatase TTM2">
    <location>
        <begin position="1"/>
        <end position="674"/>
    </location>
</feature>
<feature type="transmembrane region" description="Helical" evidence="1">
    <location>
        <begin position="650"/>
        <end position="670"/>
    </location>
</feature>
<feature type="domain" description="CYTH" evidence="2">
    <location>
        <begin position="248"/>
        <end position="410"/>
    </location>
</feature>
<feature type="region of interest" description="Disordered" evidence="3">
    <location>
        <begin position="457"/>
        <end position="498"/>
    </location>
</feature>
<feature type="region of interest" description="Disordered" evidence="3">
    <location>
        <begin position="619"/>
        <end position="640"/>
    </location>
</feature>
<feature type="compositionally biased region" description="Basic and acidic residues" evidence="3">
    <location>
        <begin position="484"/>
        <end position="496"/>
    </location>
</feature>
<feature type="compositionally biased region" description="Low complexity" evidence="3">
    <location>
        <begin position="623"/>
        <end position="640"/>
    </location>
</feature>
<gene>
    <name evidence="6" type="primary">TTM2</name>
    <name evidence="8" type="ordered locus">At1g26190</name>
    <name evidence="9" type="ORF">F28B23.13</name>
</gene>
<sequence>MGQDSNGIEFHQKRHGLLKDQVQLVKRRDSIRYEIVSIQDRLSFEKGFFAVIRACQLLSQKNDGIILVGVAGPSGAGKTVFTEKILNFLPSVAVISMDNYNDSSRIVDGNFDDPRLTDYDTLLKNLEDLKEGKQVEVPIYDFKSSSRVGYRTLDVPPSRIVIIEGIYALSEKLRPLLDLRVSVTGGVHFDLVKRVLRDIQRAGQQPEEIIHQISETVYPMYKAFIEPDLQTAQIKIINKFNPFTGFQSPTYILKSRKEVSVDQIKAVLSDGHTETKEETYDIYLLPPGEDPESCQSYLRMRNKDGKYSLMFEEWVTDTPFVISPRITFEVSVRLLGGLMALGYTIATILKRNSHVFATDKVFVKIDWLEQLNRHYMQVQGKDRQLVQSTAEQLGLEGSFIPRTYIEQIQLEKLINEVMALPDDLKNKLSLDEDLVSSSSPKEALLRASADRVAMRNKNLKRGMSHSYSTQRDKNLSKLAGYSSSDRRYEERNHDSPANEGFMTLLSEQISSLNERMDEFTSRIEELNSKLSCNKNSPTQQSLSIQTEVCNGSAPTSYFISGLDNGCLTNSIMPHSSSSSQLAKDSPLMEEISTISRGQRQVMHQLDNLCNLMRESSAERSRLARTGSSNSGNRGRSSKSSFLSNVESNKLPLVLTVAICSIGIIVIKSYINKRQ</sequence>
<dbReference type="EC" id="3.6.1.1" evidence="5"/>
<dbReference type="EMBL" id="AC079829">
    <property type="protein sequence ID" value="AAG50674.1"/>
    <property type="molecule type" value="Genomic_DNA"/>
</dbReference>
<dbReference type="EMBL" id="CP002684">
    <property type="protein sequence ID" value="AEE30659.1"/>
    <property type="molecule type" value="Genomic_DNA"/>
</dbReference>
<dbReference type="EMBL" id="AY091017">
    <property type="protein sequence ID" value="AAM14039.1"/>
    <property type="molecule type" value="mRNA"/>
</dbReference>
<dbReference type="EMBL" id="AY117297">
    <property type="protein sequence ID" value="AAM51372.1"/>
    <property type="molecule type" value="mRNA"/>
</dbReference>
<dbReference type="PIR" id="B86388">
    <property type="entry name" value="B86388"/>
</dbReference>
<dbReference type="RefSeq" id="NP_173944.1">
    <property type="nucleotide sequence ID" value="NM_102384.4"/>
</dbReference>
<dbReference type="SMR" id="Q9C664"/>
<dbReference type="FunCoup" id="Q9C664">
    <property type="interactions" value="1015"/>
</dbReference>
<dbReference type="STRING" id="3702.Q9C664"/>
<dbReference type="iPTMnet" id="Q9C664"/>
<dbReference type="PaxDb" id="3702-AT1G26190.1"/>
<dbReference type="DNASU" id="839160"/>
<dbReference type="EnsemblPlants" id="AT1G26190.1">
    <property type="protein sequence ID" value="AT1G26190.1"/>
    <property type="gene ID" value="AT1G26190"/>
</dbReference>
<dbReference type="GeneID" id="839160"/>
<dbReference type="Gramene" id="AT1G26190.1">
    <property type="protein sequence ID" value="AT1G26190.1"/>
    <property type="gene ID" value="AT1G26190"/>
</dbReference>
<dbReference type="KEGG" id="ath:AT1G26190"/>
<dbReference type="Araport" id="AT1G26190"/>
<dbReference type="TAIR" id="AT1G26190">
    <property type="gene designation" value="TTM2"/>
</dbReference>
<dbReference type="eggNOG" id="KOG4203">
    <property type="taxonomic scope" value="Eukaryota"/>
</dbReference>
<dbReference type="HOGENOM" id="CLU_028566_0_0_1"/>
<dbReference type="InParanoid" id="Q9C664"/>
<dbReference type="OrthoDB" id="10257085at2759"/>
<dbReference type="PhylomeDB" id="Q9C664"/>
<dbReference type="BioCyc" id="ARA:AT1G26190-MONOMER"/>
<dbReference type="SABIO-RK" id="Q9C664"/>
<dbReference type="PRO" id="PR:Q9C664"/>
<dbReference type="Proteomes" id="UP000006548">
    <property type="component" value="Chromosome 1"/>
</dbReference>
<dbReference type="ExpressionAtlas" id="Q9C664">
    <property type="expression patterns" value="baseline and differential"/>
</dbReference>
<dbReference type="GO" id="GO:0005741">
    <property type="term" value="C:mitochondrial outer membrane"/>
    <property type="evidence" value="ECO:0000314"/>
    <property type="project" value="UniProtKB"/>
</dbReference>
<dbReference type="GO" id="GO:0005524">
    <property type="term" value="F:ATP binding"/>
    <property type="evidence" value="ECO:0007669"/>
    <property type="project" value="InterPro"/>
</dbReference>
<dbReference type="GO" id="GO:0004427">
    <property type="term" value="F:inorganic diphosphate phosphatase activity"/>
    <property type="evidence" value="ECO:0007669"/>
    <property type="project" value="UniProtKB-EC"/>
</dbReference>
<dbReference type="GO" id="GO:0016301">
    <property type="term" value="F:kinase activity"/>
    <property type="evidence" value="ECO:0007669"/>
    <property type="project" value="InterPro"/>
</dbReference>
<dbReference type="GO" id="GO:0016462">
    <property type="term" value="F:pyrophosphatase activity"/>
    <property type="evidence" value="ECO:0000314"/>
    <property type="project" value="TAIR"/>
</dbReference>
<dbReference type="GO" id="GO:0098542">
    <property type="term" value="P:defense response to other organism"/>
    <property type="evidence" value="ECO:0000315"/>
    <property type="project" value="TAIR"/>
</dbReference>
<dbReference type="GO" id="GO:1900425">
    <property type="term" value="P:negative regulation of defense response to bacterium"/>
    <property type="evidence" value="ECO:0000315"/>
    <property type="project" value="UniProtKB"/>
</dbReference>
<dbReference type="GO" id="GO:1902289">
    <property type="term" value="P:negative regulation of defense response to oomycetes"/>
    <property type="evidence" value="ECO:0000315"/>
    <property type="project" value="UniProtKB"/>
</dbReference>
<dbReference type="GO" id="GO:0010113">
    <property type="term" value="P:negative regulation of systemic acquired resistance"/>
    <property type="evidence" value="ECO:0000315"/>
    <property type="project" value="UniProtKB"/>
</dbReference>
<dbReference type="GO" id="GO:0009626">
    <property type="term" value="P:plant-type hypersensitive response"/>
    <property type="evidence" value="ECO:0007669"/>
    <property type="project" value="UniProtKB-KW"/>
</dbReference>
<dbReference type="GO" id="GO:2000031">
    <property type="term" value="P:regulation of salicylic acid mediated signaling pathway"/>
    <property type="evidence" value="ECO:0000315"/>
    <property type="project" value="UniProtKB"/>
</dbReference>
<dbReference type="GO" id="GO:0002237">
    <property type="term" value="P:response to molecule of bacterial origin"/>
    <property type="evidence" value="ECO:0000270"/>
    <property type="project" value="UniProtKB"/>
</dbReference>
<dbReference type="GO" id="GO:0002239">
    <property type="term" value="P:response to oomycetes"/>
    <property type="evidence" value="ECO:0000270"/>
    <property type="project" value="UniProtKB"/>
</dbReference>
<dbReference type="GO" id="GO:0009751">
    <property type="term" value="P:response to salicylic acid"/>
    <property type="evidence" value="ECO:0000270"/>
    <property type="project" value="UniProtKB"/>
</dbReference>
<dbReference type="CDD" id="cd02028">
    <property type="entry name" value="UMPK_like"/>
    <property type="match status" value="1"/>
</dbReference>
<dbReference type="FunFam" id="3.40.50.300:FF:001866">
    <property type="entry name" value="Phosphoribulokinase / Uridine kinase family"/>
    <property type="match status" value="1"/>
</dbReference>
<dbReference type="Gene3D" id="2.40.320.10">
    <property type="entry name" value="Hypothetical Protein Pfu-838710-001"/>
    <property type="match status" value="1"/>
</dbReference>
<dbReference type="Gene3D" id="3.40.50.300">
    <property type="entry name" value="P-loop containing nucleotide triphosphate hydrolases"/>
    <property type="match status" value="1"/>
</dbReference>
<dbReference type="InterPro" id="IPR033469">
    <property type="entry name" value="CYTH-like_dom_sf"/>
</dbReference>
<dbReference type="InterPro" id="IPR023577">
    <property type="entry name" value="CYTH_domain"/>
</dbReference>
<dbReference type="InterPro" id="IPR027417">
    <property type="entry name" value="P-loop_NTPase"/>
</dbReference>
<dbReference type="InterPro" id="IPR006083">
    <property type="entry name" value="PRK/URK"/>
</dbReference>
<dbReference type="PANTHER" id="PTHR10285">
    <property type="entry name" value="URIDINE KINASE"/>
    <property type="match status" value="1"/>
</dbReference>
<dbReference type="Pfam" id="PF01928">
    <property type="entry name" value="CYTH"/>
    <property type="match status" value="1"/>
</dbReference>
<dbReference type="Pfam" id="PF00485">
    <property type="entry name" value="PRK"/>
    <property type="match status" value="1"/>
</dbReference>
<dbReference type="PRINTS" id="PR00988">
    <property type="entry name" value="URIDINKINASE"/>
</dbReference>
<dbReference type="SUPFAM" id="SSF55154">
    <property type="entry name" value="CYTH-like phosphatases"/>
    <property type="match status" value="1"/>
</dbReference>
<dbReference type="SUPFAM" id="SSF52540">
    <property type="entry name" value="P-loop containing nucleoside triphosphate hydrolases"/>
    <property type="match status" value="1"/>
</dbReference>
<dbReference type="PROSITE" id="PS51707">
    <property type="entry name" value="CYTH"/>
    <property type="match status" value="1"/>
</dbReference>